<proteinExistence type="inferred from homology"/>
<comment type="function">
    <text evidence="1">One of the primary rRNA binding proteins, it binds directly to 16S rRNA where it nucleates assembly of the head domain of the 30S subunit. Is located at the subunit interface close to the decoding center, probably blocks exit of the E-site tRNA.</text>
</comment>
<comment type="subunit">
    <text evidence="1">Part of the 30S ribosomal subunit. Contacts proteins S9 and S11.</text>
</comment>
<comment type="similarity">
    <text evidence="1">Belongs to the universal ribosomal protein uS7 family.</text>
</comment>
<sequence>MSRRHRAEKREINPDPKFGDTVVTKFMNAIMFEGKKSVAERIVYGALDQVQEKTKQEPVAVFHQALDNVAPHVEVRSRRVGGATYQVPVDVRPERRQALAIRWLISAARGRNEKTMVERLSGELLDASSNRGTAVKKREDTHKMAEANRAFSHYRW</sequence>
<dbReference type="EMBL" id="CP000390">
    <property type="protein sequence ID" value="ABG63077.1"/>
    <property type="molecule type" value="Genomic_DNA"/>
</dbReference>
<dbReference type="SMR" id="Q11HP8"/>
<dbReference type="STRING" id="266779.Meso_1682"/>
<dbReference type="KEGG" id="mes:Meso_1682"/>
<dbReference type="eggNOG" id="COG0049">
    <property type="taxonomic scope" value="Bacteria"/>
</dbReference>
<dbReference type="HOGENOM" id="CLU_072226_1_1_5"/>
<dbReference type="OrthoDB" id="9807653at2"/>
<dbReference type="GO" id="GO:0015935">
    <property type="term" value="C:small ribosomal subunit"/>
    <property type="evidence" value="ECO:0007669"/>
    <property type="project" value="InterPro"/>
</dbReference>
<dbReference type="GO" id="GO:0019843">
    <property type="term" value="F:rRNA binding"/>
    <property type="evidence" value="ECO:0007669"/>
    <property type="project" value="UniProtKB-UniRule"/>
</dbReference>
<dbReference type="GO" id="GO:0003735">
    <property type="term" value="F:structural constituent of ribosome"/>
    <property type="evidence" value="ECO:0007669"/>
    <property type="project" value="InterPro"/>
</dbReference>
<dbReference type="GO" id="GO:0000049">
    <property type="term" value="F:tRNA binding"/>
    <property type="evidence" value="ECO:0007669"/>
    <property type="project" value="UniProtKB-UniRule"/>
</dbReference>
<dbReference type="GO" id="GO:0006412">
    <property type="term" value="P:translation"/>
    <property type="evidence" value="ECO:0007669"/>
    <property type="project" value="UniProtKB-UniRule"/>
</dbReference>
<dbReference type="CDD" id="cd14869">
    <property type="entry name" value="uS7_Bacteria"/>
    <property type="match status" value="1"/>
</dbReference>
<dbReference type="FunFam" id="1.10.455.10:FF:000001">
    <property type="entry name" value="30S ribosomal protein S7"/>
    <property type="match status" value="1"/>
</dbReference>
<dbReference type="Gene3D" id="1.10.455.10">
    <property type="entry name" value="Ribosomal protein S7 domain"/>
    <property type="match status" value="1"/>
</dbReference>
<dbReference type="HAMAP" id="MF_00480_B">
    <property type="entry name" value="Ribosomal_uS7_B"/>
    <property type="match status" value="1"/>
</dbReference>
<dbReference type="InterPro" id="IPR000235">
    <property type="entry name" value="Ribosomal_uS7"/>
</dbReference>
<dbReference type="InterPro" id="IPR005717">
    <property type="entry name" value="Ribosomal_uS7_bac/org-type"/>
</dbReference>
<dbReference type="InterPro" id="IPR020606">
    <property type="entry name" value="Ribosomal_uS7_CS"/>
</dbReference>
<dbReference type="InterPro" id="IPR023798">
    <property type="entry name" value="Ribosomal_uS7_dom"/>
</dbReference>
<dbReference type="InterPro" id="IPR036823">
    <property type="entry name" value="Ribosomal_uS7_dom_sf"/>
</dbReference>
<dbReference type="NCBIfam" id="TIGR01029">
    <property type="entry name" value="rpsG_bact"/>
    <property type="match status" value="1"/>
</dbReference>
<dbReference type="PANTHER" id="PTHR11205">
    <property type="entry name" value="RIBOSOMAL PROTEIN S7"/>
    <property type="match status" value="1"/>
</dbReference>
<dbReference type="Pfam" id="PF00177">
    <property type="entry name" value="Ribosomal_S7"/>
    <property type="match status" value="1"/>
</dbReference>
<dbReference type="PIRSF" id="PIRSF002122">
    <property type="entry name" value="RPS7p_RPS7a_RPS5e_RPS7o"/>
    <property type="match status" value="1"/>
</dbReference>
<dbReference type="SUPFAM" id="SSF47973">
    <property type="entry name" value="Ribosomal protein S7"/>
    <property type="match status" value="1"/>
</dbReference>
<dbReference type="PROSITE" id="PS00052">
    <property type="entry name" value="RIBOSOMAL_S7"/>
    <property type="match status" value="1"/>
</dbReference>
<evidence type="ECO:0000255" key="1">
    <source>
        <dbReference type="HAMAP-Rule" id="MF_00480"/>
    </source>
</evidence>
<evidence type="ECO:0000305" key="2"/>
<organism>
    <name type="scientific">Chelativorans sp. (strain BNC1)</name>
    <dbReference type="NCBI Taxonomy" id="266779"/>
    <lineage>
        <taxon>Bacteria</taxon>
        <taxon>Pseudomonadati</taxon>
        <taxon>Pseudomonadota</taxon>
        <taxon>Alphaproteobacteria</taxon>
        <taxon>Hyphomicrobiales</taxon>
        <taxon>Phyllobacteriaceae</taxon>
        <taxon>Chelativorans</taxon>
    </lineage>
</organism>
<accession>Q11HP8</accession>
<protein>
    <recommendedName>
        <fullName evidence="1">Small ribosomal subunit protein uS7</fullName>
    </recommendedName>
    <alternativeName>
        <fullName evidence="2">30S ribosomal protein S7</fullName>
    </alternativeName>
</protein>
<reference key="1">
    <citation type="submission" date="2006-06" db="EMBL/GenBank/DDBJ databases">
        <title>Complete sequence of chromosome of Mesorhizobium sp. BNC1.</title>
        <authorList>
            <consortium name="US DOE Joint Genome Institute"/>
            <person name="Copeland A."/>
            <person name="Lucas S."/>
            <person name="Lapidus A."/>
            <person name="Barry K."/>
            <person name="Detter J.C."/>
            <person name="Glavina del Rio T."/>
            <person name="Hammon N."/>
            <person name="Israni S."/>
            <person name="Dalin E."/>
            <person name="Tice H."/>
            <person name="Pitluck S."/>
            <person name="Chertkov O."/>
            <person name="Brettin T."/>
            <person name="Bruce D."/>
            <person name="Han C."/>
            <person name="Tapia R."/>
            <person name="Gilna P."/>
            <person name="Schmutz J."/>
            <person name="Larimer F."/>
            <person name="Land M."/>
            <person name="Hauser L."/>
            <person name="Kyrpides N."/>
            <person name="Mikhailova N."/>
            <person name="Richardson P."/>
        </authorList>
    </citation>
    <scope>NUCLEOTIDE SEQUENCE [LARGE SCALE GENOMIC DNA]</scope>
    <source>
        <strain>BNC1</strain>
    </source>
</reference>
<keyword id="KW-0687">Ribonucleoprotein</keyword>
<keyword id="KW-0689">Ribosomal protein</keyword>
<keyword id="KW-0694">RNA-binding</keyword>
<keyword id="KW-0699">rRNA-binding</keyword>
<keyword id="KW-0820">tRNA-binding</keyword>
<name>RS7_CHESB</name>
<gene>
    <name evidence="1" type="primary">rpsG</name>
    <name type="ordered locus">Meso_1682</name>
</gene>
<feature type="chain" id="PRO_1000014225" description="Small ribosomal subunit protein uS7">
    <location>
        <begin position="1"/>
        <end position="156"/>
    </location>
</feature>